<accession>B9KDL4</accession>
<feature type="chain" id="PRO_1000193129" description="Phosphate acyltransferase">
    <location>
        <begin position="1"/>
        <end position="329"/>
    </location>
</feature>
<reference key="1">
    <citation type="journal article" date="2008" name="Foodborne Pathog. Dis.">
        <title>The complete genome sequence and analysis of the human pathogen Campylobacter lari.</title>
        <authorList>
            <person name="Miller W.G."/>
            <person name="Wang G."/>
            <person name="Binnewies T.T."/>
            <person name="Parker C.T."/>
        </authorList>
    </citation>
    <scope>NUCLEOTIDE SEQUENCE [LARGE SCALE GENOMIC DNA]</scope>
    <source>
        <strain>RM2100 / D67 / ATCC BAA-1060</strain>
    </source>
</reference>
<dbReference type="EC" id="2.3.1.274" evidence="1"/>
<dbReference type="EMBL" id="CP000932">
    <property type="protein sequence ID" value="ACM64652.1"/>
    <property type="molecule type" value="Genomic_DNA"/>
</dbReference>
<dbReference type="RefSeq" id="WP_012662035.1">
    <property type="nucleotide sequence ID" value="NC_012039.1"/>
</dbReference>
<dbReference type="RefSeq" id="WP_012662036.1">
    <property type="nucleotide sequence ID" value="NC_012039.1"/>
</dbReference>
<dbReference type="SMR" id="B9KDL4"/>
<dbReference type="STRING" id="306263.Cla_1337"/>
<dbReference type="KEGG" id="cla:CLA_1337"/>
<dbReference type="PATRIC" id="fig|306263.5.peg.1323"/>
<dbReference type="eggNOG" id="COG0416">
    <property type="taxonomic scope" value="Bacteria"/>
</dbReference>
<dbReference type="HOGENOM" id="CLU_039379_1_1_7"/>
<dbReference type="UniPathway" id="UPA00085"/>
<dbReference type="Proteomes" id="UP000007727">
    <property type="component" value="Chromosome"/>
</dbReference>
<dbReference type="GO" id="GO:0005737">
    <property type="term" value="C:cytoplasm"/>
    <property type="evidence" value="ECO:0007669"/>
    <property type="project" value="UniProtKB-SubCell"/>
</dbReference>
<dbReference type="GO" id="GO:0043811">
    <property type="term" value="F:phosphate:acyl-[acyl carrier protein] acyltransferase activity"/>
    <property type="evidence" value="ECO:0007669"/>
    <property type="project" value="UniProtKB-UniRule"/>
</dbReference>
<dbReference type="GO" id="GO:0006633">
    <property type="term" value="P:fatty acid biosynthetic process"/>
    <property type="evidence" value="ECO:0007669"/>
    <property type="project" value="UniProtKB-UniRule"/>
</dbReference>
<dbReference type="GO" id="GO:0008654">
    <property type="term" value="P:phospholipid biosynthetic process"/>
    <property type="evidence" value="ECO:0007669"/>
    <property type="project" value="UniProtKB-KW"/>
</dbReference>
<dbReference type="Gene3D" id="3.40.718.10">
    <property type="entry name" value="Isopropylmalate Dehydrogenase"/>
    <property type="match status" value="1"/>
</dbReference>
<dbReference type="HAMAP" id="MF_00019">
    <property type="entry name" value="PlsX"/>
    <property type="match status" value="1"/>
</dbReference>
<dbReference type="InterPro" id="IPR003664">
    <property type="entry name" value="FA_synthesis"/>
</dbReference>
<dbReference type="InterPro" id="IPR012281">
    <property type="entry name" value="Phospholipid_synth_PlsX-like"/>
</dbReference>
<dbReference type="NCBIfam" id="TIGR00182">
    <property type="entry name" value="plsX"/>
    <property type="match status" value="1"/>
</dbReference>
<dbReference type="PANTHER" id="PTHR30100">
    <property type="entry name" value="FATTY ACID/PHOSPHOLIPID SYNTHESIS PROTEIN PLSX"/>
    <property type="match status" value="1"/>
</dbReference>
<dbReference type="PANTHER" id="PTHR30100:SF1">
    <property type="entry name" value="PHOSPHATE ACYLTRANSFERASE"/>
    <property type="match status" value="1"/>
</dbReference>
<dbReference type="Pfam" id="PF02504">
    <property type="entry name" value="FA_synthesis"/>
    <property type="match status" value="1"/>
</dbReference>
<dbReference type="PIRSF" id="PIRSF002465">
    <property type="entry name" value="Phsphlp_syn_PlsX"/>
    <property type="match status" value="1"/>
</dbReference>
<dbReference type="SUPFAM" id="SSF53659">
    <property type="entry name" value="Isocitrate/Isopropylmalate dehydrogenase-like"/>
    <property type="match status" value="1"/>
</dbReference>
<sequence length="329" mass="36037">MTSIAIDAMGGDFGEKPIIEGVIQALKEREFKAILVGDPQKLKTLIPQELNSYIEYEEAFDVFAMDENSTDALKRKDSTIYKAIDLVRNQKAKAIVSAGHSGATMSLATLRLGRLANIARPAIATLMPNIHSRTLVLDVGANVDCKSEHLFQFAIMGEAYAKEILKIAKPRVALLSNGEEECKGNELTKETHQLLKQLPNFVGNAEGRDIFNGTIDVLVCDGFNGNILLKTGEGVASVITKLLKQEIQKSFLAKLGYLLAKPAFNELKTHIDYEEYGGAPLLGVKECVIISHGKSGPKAIKNAIFQALNFTQSNINQTIEKELSNYEIN</sequence>
<name>PLSX_CAMLR</name>
<gene>
    <name evidence="1" type="primary">plsX</name>
    <name type="ordered locus">Cla_1337</name>
</gene>
<protein>
    <recommendedName>
        <fullName evidence="1">Phosphate acyltransferase</fullName>
        <ecNumber evidence="1">2.3.1.274</ecNumber>
    </recommendedName>
    <alternativeName>
        <fullName evidence="1">Acyl-ACP phosphotransacylase</fullName>
    </alternativeName>
    <alternativeName>
        <fullName evidence="1">Acyl-[acyl-carrier-protein]--phosphate acyltransferase</fullName>
    </alternativeName>
    <alternativeName>
        <fullName evidence="1">Phosphate-acyl-ACP acyltransferase</fullName>
    </alternativeName>
</protein>
<keyword id="KW-0963">Cytoplasm</keyword>
<keyword id="KW-0444">Lipid biosynthesis</keyword>
<keyword id="KW-0443">Lipid metabolism</keyword>
<keyword id="KW-0594">Phospholipid biosynthesis</keyword>
<keyword id="KW-1208">Phospholipid metabolism</keyword>
<keyword id="KW-1185">Reference proteome</keyword>
<keyword id="KW-0808">Transferase</keyword>
<comment type="function">
    <text evidence="1">Catalyzes the reversible formation of acyl-phosphate (acyl-PO(4)) from acyl-[acyl-carrier-protein] (acyl-ACP). This enzyme utilizes acyl-ACP as fatty acyl donor, but not acyl-CoA.</text>
</comment>
<comment type="catalytic activity">
    <reaction evidence="1">
        <text>a fatty acyl-[ACP] + phosphate = an acyl phosphate + holo-[ACP]</text>
        <dbReference type="Rhea" id="RHEA:42292"/>
        <dbReference type="Rhea" id="RHEA-COMP:9685"/>
        <dbReference type="Rhea" id="RHEA-COMP:14125"/>
        <dbReference type="ChEBI" id="CHEBI:43474"/>
        <dbReference type="ChEBI" id="CHEBI:59918"/>
        <dbReference type="ChEBI" id="CHEBI:64479"/>
        <dbReference type="ChEBI" id="CHEBI:138651"/>
        <dbReference type="EC" id="2.3.1.274"/>
    </reaction>
</comment>
<comment type="pathway">
    <text evidence="1">Lipid metabolism; phospholipid metabolism.</text>
</comment>
<comment type="subunit">
    <text evidence="1">Homodimer. Probably interacts with PlsY.</text>
</comment>
<comment type="subcellular location">
    <subcellularLocation>
        <location evidence="1">Cytoplasm</location>
    </subcellularLocation>
    <text evidence="1">Associated with the membrane possibly through PlsY.</text>
</comment>
<comment type="similarity">
    <text evidence="1">Belongs to the PlsX family.</text>
</comment>
<proteinExistence type="inferred from homology"/>
<evidence type="ECO:0000255" key="1">
    <source>
        <dbReference type="HAMAP-Rule" id="MF_00019"/>
    </source>
</evidence>
<organism>
    <name type="scientific">Campylobacter lari (strain RM2100 / D67 / ATCC BAA-1060)</name>
    <dbReference type="NCBI Taxonomy" id="306263"/>
    <lineage>
        <taxon>Bacteria</taxon>
        <taxon>Pseudomonadati</taxon>
        <taxon>Campylobacterota</taxon>
        <taxon>Epsilonproteobacteria</taxon>
        <taxon>Campylobacterales</taxon>
        <taxon>Campylobacteraceae</taxon>
        <taxon>Campylobacter</taxon>
    </lineage>
</organism>